<gene>
    <name evidence="1" type="primary">prfB</name>
    <name type="ordered locus">CFF8240_1369</name>
</gene>
<accession>A0RQM7</accession>
<dbReference type="EMBL" id="CP000487">
    <property type="protein sequence ID" value="ABK83126.1"/>
    <property type="molecule type" value="Genomic_DNA"/>
</dbReference>
<dbReference type="RefSeq" id="WP_011732174.1">
    <property type="nucleotide sequence ID" value="NC_008599.1"/>
</dbReference>
<dbReference type="SMR" id="A0RQM7"/>
<dbReference type="GeneID" id="61065185"/>
<dbReference type="KEGG" id="cff:CFF8240_1369"/>
<dbReference type="PATRIC" id="fig|360106.6.peg.1332"/>
<dbReference type="eggNOG" id="COG1186">
    <property type="taxonomic scope" value="Bacteria"/>
</dbReference>
<dbReference type="HOGENOM" id="CLU_036856_6_0_7"/>
<dbReference type="Proteomes" id="UP000000760">
    <property type="component" value="Chromosome"/>
</dbReference>
<dbReference type="GO" id="GO:0005737">
    <property type="term" value="C:cytoplasm"/>
    <property type="evidence" value="ECO:0007669"/>
    <property type="project" value="UniProtKB-SubCell"/>
</dbReference>
<dbReference type="GO" id="GO:0016149">
    <property type="term" value="F:translation release factor activity, codon specific"/>
    <property type="evidence" value="ECO:0007669"/>
    <property type="project" value="UniProtKB-UniRule"/>
</dbReference>
<dbReference type="FunFam" id="3.30.160.20:FF:000010">
    <property type="entry name" value="Peptide chain release factor 2"/>
    <property type="match status" value="1"/>
</dbReference>
<dbReference type="Gene3D" id="3.30.160.20">
    <property type="match status" value="1"/>
</dbReference>
<dbReference type="Gene3D" id="3.30.70.1660">
    <property type="match status" value="1"/>
</dbReference>
<dbReference type="Gene3D" id="1.20.58.410">
    <property type="entry name" value="Release factor"/>
    <property type="match status" value="1"/>
</dbReference>
<dbReference type="HAMAP" id="MF_00094">
    <property type="entry name" value="Rel_fac_2"/>
    <property type="match status" value="1"/>
</dbReference>
<dbReference type="InterPro" id="IPR005139">
    <property type="entry name" value="PCRF"/>
</dbReference>
<dbReference type="InterPro" id="IPR000352">
    <property type="entry name" value="Pep_chain_release_fac_I"/>
</dbReference>
<dbReference type="InterPro" id="IPR045853">
    <property type="entry name" value="Pep_chain_release_fac_I_sf"/>
</dbReference>
<dbReference type="InterPro" id="IPR004374">
    <property type="entry name" value="PrfB"/>
</dbReference>
<dbReference type="NCBIfam" id="TIGR00020">
    <property type="entry name" value="prfB"/>
    <property type="match status" value="1"/>
</dbReference>
<dbReference type="PANTHER" id="PTHR43116:SF3">
    <property type="entry name" value="CLASS I PEPTIDE CHAIN RELEASE FACTOR"/>
    <property type="match status" value="1"/>
</dbReference>
<dbReference type="PANTHER" id="PTHR43116">
    <property type="entry name" value="PEPTIDE CHAIN RELEASE FACTOR 2"/>
    <property type="match status" value="1"/>
</dbReference>
<dbReference type="Pfam" id="PF03462">
    <property type="entry name" value="PCRF"/>
    <property type="match status" value="1"/>
</dbReference>
<dbReference type="Pfam" id="PF00472">
    <property type="entry name" value="RF-1"/>
    <property type="match status" value="1"/>
</dbReference>
<dbReference type="SMART" id="SM00937">
    <property type="entry name" value="PCRF"/>
    <property type="match status" value="1"/>
</dbReference>
<dbReference type="SUPFAM" id="SSF75620">
    <property type="entry name" value="Release factor"/>
    <property type="match status" value="1"/>
</dbReference>
<dbReference type="PROSITE" id="PS00745">
    <property type="entry name" value="RF_PROK_I"/>
    <property type="match status" value="1"/>
</dbReference>
<keyword id="KW-0963">Cytoplasm</keyword>
<keyword id="KW-0488">Methylation</keyword>
<keyword id="KW-0648">Protein biosynthesis</keyword>
<feature type="chain" id="PRO_1000004979" description="Peptide chain release factor 2">
    <location>
        <begin position="1"/>
        <end position="369"/>
    </location>
</feature>
<feature type="modified residue" description="N5-methylglutamine" evidence="1">
    <location>
        <position position="251"/>
    </location>
</feature>
<sequence>MDSYEYTELLKKLNTKVQNISRVIKPQDIEIRLKEIEDIENRPEFWNDIKKASEIGKEKTKISNMLCKFKNVKSAISDAYELYELANAEDDEQTINSLFEDAQNLENKITNLEISMMLSGEDDSKNAIVSIHPGAGGTESNDWASMLYRMYLRFCEREGFKVETLDFQEGDEAGLKDVSFIVKGENAYGYLKAENGIHRLVRTSPFDSAGRRHTSFSSVMVSPEVDDDIAIEIEEKDLRLDYYRASGAGGQHVNKTESAVRITHIPTGIVVQCQNDRSQHKNKATAMKMLKSRLYEFELMKQQEANNAIEKSEIGWGHQIRSYVLFPYQQVKDTRSGEAYSQTDAILDGDIKKIIESVLISQKSSANKE</sequence>
<organism>
    <name type="scientific">Campylobacter fetus subsp. fetus (strain 82-40)</name>
    <dbReference type="NCBI Taxonomy" id="360106"/>
    <lineage>
        <taxon>Bacteria</taxon>
        <taxon>Pseudomonadati</taxon>
        <taxon>Campylobacterota</taxon>
        <taxon>Epsilonproteobacteria</taxon>
        <taxon>Campylobacterales</taxon>
        <taxon>Campylobacteraceae</taxon>
        <taxon>Campylobacter</taxon>
    </lineage>
</organism>
<comment type="function">
    <text evidence="1">Peptide chain release factor 2 directs the termination of translation in response to the peptide chain termination codons UGA and UAA.</text>
</comment>
<comment type="subcellular location">
    <subcellularLocation>
        <location evidence="1">Cytoplasm</location>
    </subcellularLocation>
</comment>
<comment type="PTM">
    <text evidence="1">Methylated by PrmC. Methylation increases the termination efficiency of RF2.</text>
</comment>
<comment type="similarity">
    <text evidence="1">Belongs to the prokaryotic/mitochondrial release factor family.</text>
</comment>
<name>RF2_CAMFF</name>
<protein>
    <recommendedName>
        <fullName evidence="1">Peptide chain release factor 2</fullName>
        <shortName evidence="1">RF-2</shortName>
    </recommendedName>
</protein>
<evidence type="ECO:0000255" key="1">
    <source>
        <dbReference type="HAMAP-Rule" id="MF_00094"/>
    </source>
</evidence>
<proteinExistence type="inferred from homology"/>
<reference key="1">
    <citation type="submission" date="2006-11" db="EMBL/GenBank/DDBJ databases">
        <title>Sequence of Campylobacter fetus subsp. fetus 82-40.</title>
        <authorList>
            <person name="Fouts D.E."/>
            <person name="Nelson K.E."/>
        </authorList>
    </citation>
    <scope>NUCLEOTIDE SEQUENCE [LARGE SCALE GENOMIC DNA]</scope>
    <source>
        <strain>82-40</strain>
    </source>
</reference>